<comment type="function">
    <text evidence="2">Catalyzes the formation of N(7)-methylguanine at position 46 (m7G46) in tRNA.</text>
</comment>
<comment type="catalytic activity">
    <reaction evidence="2">
        <text>guanosine(46) in tRNA + S-adenosyl-L-methionine = N(7)-methylguanosine(46) in tRNA + S-adenosyl-L-homocysteine</text>
        <dbReference type="Rhea" id="RHEA:42708"/>
        <dbReference type="Rhea" id="RHEA-COMP:10188"/>
        <dbReference type="Rhea" id="RHEA-COMP:10189"/>
        <dbReference type="ChEBI" id="CHEBI:57856"/>
        <dbReference type="ChEBI" id="CHEBI:59789"/>
        <dbReference type="ChEBI" id="CHEBI:74269"/>
        <dbReference type="ChEBI" id="CHEBI:74480"/>
        <dbReference type="EC" id="2.1.1.33"/>
    </reaction>
</comment>
<comment type="pathway">
    <text evidence="2">tRNA modification; N(7)-methylguanine-tRNA biosynthesis.</text>
</comment>
<comment type="similarity">
    <text evidence="2">Belongs to the class I-like SAM-binding methyltransferase superfamily. TrmB family.</text>
</comment>
<dbReference type="EC" id="2.1.1.33" evidence="2"/>
<dbReference type="EMBL" id="AE004092">
    <property type="protein sequence ID" value="AAK34471.1"/>
    <property type="molecule type" value="Genomic_DNA"/>
</dbReference>
<dbReference type="EMBL" id="CP000017">
    <property type="protein sequence ID" value="AAZ52086.1"/>
    <property type="molecule type" value="Genomic_DNA"/>
</dbReference>
<dbReference type="RefSeq" id="NP_269750.1">
    <property type="nucleotide sequence ID" value="NC_002737.2"/>
</dbReference>
<dbReference type="SMR" id="P67504"/>
<dbReference type="PaxDb" id="1314-HKU360_01522"/>
<dbReference type="KEGG" id="spy:SPy_1726"/>
<dbReference type="KEGG" id="spz:M5005_Spy1468"/>
<dbReference type="PATRIC" id="fig|160490.10.peg.1501"/>
<dbReference type="HOGENOM" id="CLU_050910_2_1_9"/>
<dbReference type="OMA" id="PDPQIKY"/>
<dbReference type="UniPathway" id="UPA00989"/>
<dbReference type="Proteomes" id="UP000000750">
    <property type="component" value="Chromosome"/>
</dbReference>
<dbReference type="GO" id="GO:0043527">
    <property type="term" value="C:tRNA methyltransferase complex"/>
    <property type="evidence" value="ECO:0007669"/>
    <property type="project" value="TreeGrafter"/>
</dbReference>
<dbReference type="GO" id="GO:0008176">
    <property type="term" value="F:tRNA (guanine(46)-N7)-methyltransferase activity"/>
    <property type="evidence" value="ECO:0007669"/>
    <property type="project" value="UniProtKB-UniRule"/>
</dbReference>
<dbReference type="CDD" id="cd02440">
    <property type="entry name" value="AdoMet_MTases"/>
    <property type="match status" value="1"/>
</dbReference>
<dbReference type="FunFam" id="3.40.50.150:FF:000035">
    <property type="entry name" value="tRNA (guanine-N(7)-)-methyltransferase"/>
    <property type="match status" value="1"/>
</dbReference>
<dbReference type="Gene3D" id="3.40.50.150">
    <property type="entry name" value="Vaccinia Virus protein VP39"/>
    <property type="match status" value="1"/>
</dbReference>
<dbReference type="HAMAP" id="MF_01057">
    <property type="entry name" value="tRNA_methyltr_TrmB"/>
    <property type="match status" value="1"/>
</dbReference>
<dbReference type="InterPro" id="IPR029063">
    <property type="entry name" value="SAM-dependent_MTases_sf"/>
</dbReference>
<dbReference type="InterPro" id="IPR003358">
    <property type="entry name" value="tRNA_(Gua-N-7)_MeTrfase_Trmb"/>
</dbReference>
<dbReference type="InterPro" id="IPR055361">
    <property type="entry name" value="tRNA_methyltr_TrmB_bact"/>
</dbReference>
<dbReference type="NCBIfam" id="NF001080">
    <property type="entry name" value="PRK00121.2-2"/>
    <property type="match status" value="1"/>
</dbReference>
<dbReference type="NCBIfam" id="TIGR00091">
    <property type="entry name" value="tRNA (guanosine(46)-N7)-methyltransferase TrmB"/>
    <property type="match status" value="1"/>
</dbReference>
<dbReference type="PANTHER" id="PTHR23417">
    <property type="entry name" value="3-DEOXY-D-MANNO-OCTULOSONIC-ACID TRANSFERASE/TRNA GUANINE-N 7 - -METHYLTRANSFERASE"/>
    <property type="match status" value="1"/>
</dbReference>
<dbReference type="PANTHER" id="PTHR23417:SF14">
    <property type="entry name" value="PENTACOTRIPEPTIDE-REPEAT REGION OF PRORP DOMAIN-CONTAINING PROTEIN"/>
    <property type="match status" value="1"/>
</dbReference>
<dbReference type="Pfam" id="PF02390">
    <property type="entry name" value="Methyltransf_4"/>
    <property type="match status" value="1"/>
</dbReference>
<dbReference type="SUPFAM" id="SSF53335">
    <property type="entry name" value="S-adenosyl-L-methionine-dependent methyltransferases"/>
    <property type="match status" value="1"/>
</dbReference>
<dbReference type="PROSITE" id="PS51625">
    <property type="entry name" value="SAM_MT_TRMB"/>
    <property type="match status" value="1"/>
</dbReference>
<keyword id="KW-0489">Methyltransferase</keyword>
<keyword id="KW-1185">Reference proteome</keyword>
<keyword id="KW-0949">S-adenosyl-L-methionine</keyword>
<keyword id="KW-0808">Transferase</keyword>
<keyword id="KW-0819">tRNA processing</keyword>
<evidence type="ECO:0000250" key="1"/>
<evidence type="ECO:0000255" key="2">
    <source>
        <dbReference type="HAMAP-Rule" id="MF_01057"/>
    </source>
</evidence>
<proteinExistence type="inferred from homology"/>
<gene>
    <name evidence="2" type="primary">trmB</name>
    <name type="ordered locus">SPy_1726</name>
    <name type="ordered locus">M5005_Spy1468</name>
</gene>
<protein>
    <recommendedName>
        <fullName evidence="2">tRNA (guanine-N(7)-)-methyltransferase</fullName>
        <ecNumber evidence="2">2.1.1.33</ecNumber>
    </recommendedName>
    <alternativeName>
        <fullName evidence="2">tRNA (guanine(46)-N(7))-methyltransferase</fullName>
    </alternativeName>
    <alternativeName>
        <fullName evidence="2">tRNA(m7G46)-methyltransferase</fullName>
    </alternativeName>
</protein>
<sequence>MRVRKRKGAEEHLANNPHYVILNPEDAKGRWHDVFGNDRPIHIEVGSGKGGFITGMALKNPDINYIGIDIQLSVLSYALDKVLASEVPNVKLLRVDGSSLTNYFEDGEVDMMYLNFSDPWPKTKHEKRRLTYKDFLDTYKRILPEHGEIHFKTDNRGLFEYSLASFSQYGMTLRQIWLDLHASNYEGNVMTEYEEKFSNKGQVIYRVEANF</sequence>
<feature type="chain" id="PRO_0000171405" description="tRNA (guanine-N(7)-)-methyltransferase">
    <location>
        <begin position="1"/>
        <end position="211"/>
    </location>
</feature>
<feature type="region of interest" description="Interaction with RNA" evidence="2">
    <location>
        <begin position="124"/>
        <end position="129"/>
    </location>
</feature>
<feature type="active site" evidence="1">
    <location>
        <position position="118"/>
    </location>
</feature>
<feature type="binding site" evidence="2">
    <location>
        <position position="44"/>
    </location>
    <ligand>
        <name>S-adenosyl-L-methionine</name>
        <dbReference type="ChEBI" id="CHEBI:59789"/>
    </ligand>
</feature>
<feature type="binding site" evidence="2">
    <location>
        <position position="69"/>
    </location>
    <ligand>
        <name>S-adenosyl-L-methionine</name>
        <dbReference type="ChEBI" id="CHEBI:59789"/>
    </ligand>
</feature>
<feature type="binding site" evidence="2">
    <location>
        <position position="96"/>
    </location>
    <ligand>
        <name>S-adenosyl-L-methionine</name>
        <dbReference type="ChEBI" id="CHEBI:59789"/>
    </ligand>
</feature>
<feature type="binding site" evidence="2">
    <location>
        <position position="118"/>
    </location>
    <ligand>
        <name>S-adenosyl-L-methionine</name>
        <dbReference type="ChEBI" id="CHEBI:59789"/>
    </ligand>
</feature>
<feature type="binding site" evidence="2">
    <location>
        <position position="122"/>
    </location>
    <ligand>
        <name>substrate</name>
    </ligand>
</feature>
<feature type="binding site" evidence="2">
    <location>
        <position position="154"/>
    </location>
    <ligand>
        <name>substrate</name>
    </ligand>
</feature>
<feature type="binding site" evidence="2">
    <location>
        <begin position="191"/>
        <end position="194"/>
    </location>
    <ligand>
        <name>substrate</name>
    </ligand>
</feature>
<reference key="1">
    <citation type="journal article" date="2001" name="Proc. Natl. Acad. Sci. U.S.A.">
        <title>Complete genome sequence of an M1 strain of Streptococcus pyogenes.</title>
        <authorList>
            <person name="Ferretti J.J."/>
            <person name="McShan W.M."/>
            <person name="Ajdic D.J."/>
            <person name="Savic D.J."/>
            <person name="Savic G."/>
            <person name="Lyon K."/>
            <person name="Primeaux C."/>
            <person name="Sezate S."/>
            <person name="Suvorov A.N."/>
            <person name="Kenton S."/>
            <person name="Lai H.S."/>
            <person name="Lin S.P."/>
            <person name="Qian Y."/>
            <person name="Jia H.G."/>
            <person name="Najar F.Z."/>
            <person name="Ren Q."/>
            <person name="Zhu H."/>
            <person name="Song L."/>
            <person name="White J."/>
            <person name="Yuan X."/>
            <person name="Clifton S.W."/>
            <person name="Roe B.A."/>
            <person name="McLaughlin R.E."/>
        </authorList>
    </citation>
    <scope>NUCLEOTIDE SEQUENCE [LARGE SCALE GENOMIC DNA]</scope>
    <source>
        <strain>ATCC 700294 / SF370 / Serotype M1</strain>
    </source>
</reference>
<reference key="2">
    <citation type="journal article" date="2005" name="J. Infect. Dis.">
        <title>Evolutionary origin and emergence of a highly successful clone of serotype M1 group A Streptococcus involved multiple horizontal gene transfer events.</title>
        <authorList>
            <person name="Sumby P."/>
            <person name="Porcella S.F."/>
            <person name="Madrigal A.G."/>
            <person name="Barbian K.D."/>
            <person name="Virtaneva K."/>
            <person name="Ricklefs S.M."/>
            <person name="Sturdevant D.E."/>
            <person name="Graham M.R."/>
            <person name="Vuopio-Varkila J."/>
            <person name="Hoe N.P."/>
            <person name="Musser J.M."/>
        </authorList>
    </citation>
    <scope>NUCLEOTIDE SEQUENCE [LARGE SCALE GENOMIC DNA]</scope>
    <source>
        <strain>ATCC BAA-947 / MGAS5005 / Serotype M1</strain>
    </source>
</reference>
<accession>P67504</accession>
<accession>P58090</accession>
<accession>Q48X39</accession>
<name>TRMB_STRP1</name>
<organism>
    <name type="scientific">Streptococcus pyogenes serotype M1</name>
    <dbReference type="NCBI Taxonomy" id="301447"/>
    <lineage>
        <taxon>Bacteria</taxon>
        <taxon>Bacillati</taxon>
        <taxon>Bacillota</taxon>
        <taxon>Bacilli</taxon>
        <taxon>Lactobacillales</taxon>
        <taxon>Streptococcaceae</taxon>
        <taxon>Streptococcus</taxon>
    </lineage>
</organism>